<sequence length="200" mass="23239">MKKITIIAVSKNRNINNIEEAIRSGINNFGENYLQESLIKIENLKKYKNITWHFIGKIQSNKTKKIAQNFSWCQTVDREKIAVLLNKFRPKNLPPINVLIQINNLKELQNNRYIDQYQELAQLILSMPNLNLRGIMAVPSIKTNVIENNLQYEKIKTIFNRFKRQYSSVDTLSLGTSVDIKESLLATSNMVRIGRNIFNI</sequence>
<keyword id="KW-0663">Pyridoxal phosphate</keyword>
<keyword id="KW-1185">Reference proteome</keyword>
<feature type="chain" id="PRO_0000163191" description="Pyridoxal phosphate homeostasis protein">
    <location>
        <begin position="1"/>
        <end position="200"/>
    </location>
</feature>
<feature type="modified residue" description="N6-(pyridoxal phosphate)lysine" evidence="1">
    <location>
        <position position="11"/>
    </location>
</feature>
<proteinExistence type="inferred from homology"/>
<name>PLPHP_BUCAI</name>
<accession>P57614</accession>
<comment type="function">
    <text evidence="1">Pyridoxal 5'-phosphate (PLP)-binding protein, which is involved in PLP homeostasis.</text>
</comment>
<comment type="subunit">
    <text evidence="1">Monomer.</text>
</comment>
<comment type="similarity">
    <text evidence="1">Belongs to the pyridoxal phosphate-binding protein YggS/PROSC family.</text>
</comment>
<gene>
    <name type="ordered locus">BU549</name>
</gene>
<reference key="1">
    <citation type="journal article" date="2000" name="Nature">
        <title>Genome sequence of the endocellular bacterial symbiont of aphids Buchnera sp. APS.</title>
        <authorList>
            <person name="Shigenobu S."/>
            <person name="Watanabe H."/>
            <person name="Hattori M."/>
            <person name="Sakaki Y."/>
            <person name="Ishikawa H."/>
        </authorList>
    </citation>
    <scope>NUCLEOTIDE SEQUENCE [LARGE SCALE GENOMIC DNA]</scope>
    <source>
        <strain>APS</strain>
    </source>
</reference>
<protein>
    <recommendedName>
        <fullName evidence="1">Pyridoxal phosphate homeostasis protein</fullName>
        <shortName evidence="1">PLP homeostasis protein</shortName>
    </recommendedName>
</protein>
<dbReference type="EMBL" id="BA000003">
    <property type="protein sequence ID" value="BAB13241.1"/>
    <property type="molecule type" value="Genomic_DNA"/>
</dbReference>
<dbReference type="RefSeq" id="NP_240355.1">
    <property type="nucleotide sequence ID" value="NC_002528.1"/>
</dbReference>
<dbReference type="RefSeq" id="WP_009874499.1">
    <property type="nucleotide sequence ID" value="NZ_AP036055.1"/>
</dbReference>
<dbReference type="SMR" id="P57614"/>
<dbReference type="STRING" id="563178.BUAP5A_542"/>
<dbReference type="EnsemblBacteria" id="BAB13241">
    <property type="protein sequence ID" value="BAB13241"/>
    <property type="gene ID" value="BAB13241"/>
</dbReference>
<dbReference type="KEGG" id="buc:BU549"/>
<dbReference type="PATRIC" id="fig|107806.10.peg.553"/>
<dbReference type="eggNOG" id="COG0325">
    <property type="taxonomic scope" value="Bacteria"/>
</dbReference>
<dbReference type="HOGENOM" id="CLU_059988_0_1_6"/>
<dbReference type="BioCyc" id="BAPH107806:GBZJ-542-MONOMER"/>
<dbReference type="Proteomes" id="UP000001806">
    <property type="component" value="Chromosome"/>
</dbReference>
<dbReference type="GO" id="GO:0030170">
    <property type="term" value="F:pyridoxal phosphate binding"/>
    <property type="evidence" value="ECO:0007669"/>
    <property type="project" value="UniProtKB-UniRule"/>
</dbReference>
<dbReference type="Gene3D" id="3.20.20.10">
    <property type="entry name" value="Alanine racemase"/>
    <property type="match status" value="1"/>
</dbReference>
<dbReference type="HAMAP" id="MF_02087">
    <property type="entry name" value="PLP_homeostasis"/>
    <property type="match status" value="1"/>
</dbReference>
<dbReference type="InterPro" id="IPR001608">
    <property type="entry name" value="Ala_racemase_N"/>
</dbReference>
<dbReference type="InterPro" id="IPR029066">
    <property type="entry name" value="PLP-binding_barrel"/>
</dbReference>
<dbReference type="InterPro" id="IPR011078">
    <property type="entry name" value="PyrdxlP_homeostasis"/>
</dbReference>
<dbReference type="NCBIfam" id="TIGR00044">
    <property type="entry name" value="YggS family pyridoxal phosphate-dependent enzyme"/>
    <property type="match status" value="1"/>
</dbReference>
<dbReference type="PANTHER" id="PTHR10146">
    <property type="entry name" value="PROLINE SYNTHETASE CO-TRANSCRIBED BACTERIAL HOMOLOG PROTEIN"/>
    <property type="match status" value="1"/>
</dbReference>
<dbReference type="PANTHER" id="PTHR10146:SF14">
    <property type="entry name" value="PYRIDOXAL PHOSPHATE HOMEOSTASIS PROTEIN"/>
    <property type="match status" value="1"/>
</dbReference>
<dbReference type="Pfam" id="PF01168">
    <property type="entry name" value="Ala_racemase_N"/>
    <property type="match status" value="1"/>
</dbReference>
<dbReference type="PIRSF" id="PIRSF004848">
    <property type="entry name" value="YBL036c_PLPDEIII"/>
    <property type="match status" value="1"/>
</dbReference>
<dbReference type="SUPFAM" id="SSF51419">
    <property type="entry name" value="PLP-binding barrel"/>
    <property type="match status" value="1"/>
</dbReference>
<dbReference type="PROSITE" id="PS01211">
    <property type="entry name" value="UPF0001"/>
    <property type="match status" value="1"/>
</dbReference>
<organism>
    <name type="scientific">Buchnera aphidicola subsp. Acyrthosiphon pisum (strain APS)</name>
    <name type="common">Acyrthosiphon pisum symbiotic bacterium</name>
    <dbReference type="NCBI Taxonomy" id="107806"/>
    <lineage>
        <taxon>Bacteria</taxon>
        <taxon>Pseudomonadati</taxon>
        <taxon>Pseudomonadota</taxon>
        <taxon>Gammaproteobacteria</taxon>
        <taxon>Enterobacterales</taxon>
        <taxon>Erwiniaceae</taxon>
        <taxon>Buchnera</taxon>
    </lineage>
</organism>
<evidence type="ECO:0000255" key="1">
    <source>
        <dbReference type="HAMAP-Rule" id="MF_02087"/>
    </source>
</evidence>